<comment type="function">
    <text evidence="1">Required for the timely initiation of chromosomal replication via direct interactions with the DnaA initiator protein.</text>
</comment>
<comment type="subunit">
    <text evidence="1">Homotetramer; dimer of dimers.</text>
</comment>
<comment type="similarity">
    <text evidence="1">Belongs to the SIS family. DiaA subfamily.</text>
</comment>
<dbReference type="EMBL" id="CP000886">
    <property type="protein sequence ID" value="ABX69404.1"/>
    <property type="molecule type" value="Genomic_DNA"/>
</dbReference>
<dbReference type="RefSeq" id="WP_000893481.1">
    <property type="nucleotide sequence ID" value="NC_010102.1"/>
</dbReference>
<dbReference type="SMR" id="A9N712"/>
<dbReference type="GeneID" id="66757607"/>
<dbReference type="KEGG" id="spq:SPAB_04077"/>
<dbReference type="PATRIC" id="fig|1016998.12.peg.3841"/>
<dbReference type="HOGENOM" id="CLU_080999_3_1_6"/>
<dbReference type="BioCyc" id="SENT1016998:SPAB_RS16550-MONOMER"/>
<dbReference type="Proteomes" id="UP000008556">
    <property type="component" value="Chromosome"/>
</dbReference>
<dbReference type="GO" id="GO:0097367">
    <property type="term" value="F:carbohydrate derivative binding"/>
    <property type="evidence" value="ECO:0007669"/>
    <property type="project" value="InterPro"/>
</dbReference>
<dbReference type="GO" id="GO:1901135">
    <property type="term" value="P:carbohydrate derivative metabolic process"/>
    <property type="evidence" value="ECO:0007669"/>
    <property type="project" value="InterPro"/>
</dbReference>
<dbReference type="GO" id="GO:0006260">
    <property type="term" value="P:DNA replication"/>
    <property type="evidence" value="ECO:0007669"/>
    <property type="project" value="UniProtKB-UniRule"/>
</dbReference>
<dbReference type="CDD" id="cd05006">
    <property type="entry name" value="SIS_GmhA"/>
    <property type="match status" value="1"/>
</dbReference>
<dbReference type="FunFam" id="3.40.50.10490:FF:000006">
    <property type="entry name" value="DnaA initiator-associating protein DiaA"/>
    <property type="match status" value="1"/>
</dbReference>
<dbReference type="Gene3D" id="3.40.50.10490">
    <property type="entry name" value="Glucose-6-phosphate isomerase like protein, domain 1"/>
    <property type="match status" value="1"/>
</dbReference>
<dbReference type="HAMAP" id="MF_01157">
    <property type="entry name" value="SIS_DiaA"/>
    <property type="match status" value="1"/>
</dbReference>
<dbReference type="InterPro" id="IPR023070">
    <property type="entry name" value="DiaA"/>
</dbReference>
<dbReference type="InterPro" id="IPR035461">
    <property type="entry name" value="GmhA/DiaA"/>
</dbReference>
<dbReference type="InterPro" id="IPR001347">
    <property type="entry name" value="SIS_dom"/>
</dbReference>
<dbReference type="InterPro" id="IPR046348">
    <property type="entry name" value="SIS_dom_sf"/>
</dbReference>
<dbReference type="InterPro" id="IPR050099">
    <property type="entry name" value="SIS_GmhA/DiaA_subfam"/>
</dbReference>
<dbReference type="NCBIfam" id="NF008138">
    <property type="entry name" value="PRK10886.1"/>
    <property type="match status" value="1"/>
</dbReference>
<dbReference type="PANTHER" id="PTHR30390:SF6">
    <property type="entry name" value="DNAA INITIATOR-ASSOCIATING PROTEIN DIAA"/>
    <property type="match status" value="1"/>
</dbReference>
<dbReference type="PANTHER" id="PTHR30390">
    <property type="entry name" value="SEDOHEPTULOSE 7-PHOSPHATE ISOMERASE / DNAA INITIATOR-ASSOCIATING FACTOR FOR REPLICATION INITIATION"/>
    <property type="match status" value="1"/>
</dbReference>
<dbReference type="Pfam" id="PF13580">
    <property type="entry name" value="SIS_2"/>
    <property type="match status" value="1"/>
</dbReference>
<dbReference type="SUPFAM" id="SSF53697">
    <property type="entry name" value="SIS domain"/>
    <property type="match status" value="1"/>
</dbReference>
<dbReference type="PROSITE" id="PS51464">
    <property type="entry name" value="SIS"/>
    <property type="match status" value="1"/>
</dbReference>
<organism>
    <name type="scientific">Salmonella paratyphi B (strain ATCC BAA-1250 / SPB7)</name>
    <dbReference type="NCBI Taxonomy" id="1016998"/>
    <lineage>
        <taxon>Bacteria</taxon>
        <taxon>Pseudomonadati</taxon>
        <taxon>Pseudomonadota</taxon>
        <taxon>Gammaproteobacteria</taxon>
        <taxon>Enterobacterales</taxon>
        <taxon>Enterobacteriaceae</taxon>
        <taxon>Salmonella</taxon>
    </lineage>
</organism>
<proteinExistence type="inferred from homology"/>
<sequence>MLERIKVCFTESIQTQIAAAEALPDAISRAAMTLVHSLLNGNKILCCGNGTSAANAQHFAASMINRFETERPSLPAIALNTDNVVLTAIANDRLHDEVYAKQVRALGHAGDVLLAISTRGNSRDIVKAVEAAVTRDMTIVALTGYDGGELAGLLGPQDVEIRIPSHHSARIQEMHMLTVNCLCDLIDNTLFPHQDD</sequence>
<name>DIAA_SALPB</name>
<keyword id="KW-0235">DNA replication</keyword>
<evidence type="ECO:0000255" key="1">
    <source>
        <dbReference type="HAMAP-Rule" id="MF_01157"/>
    </source>
</evidence>
<gene>
    <name evidence="1" type="primary">diaA</name>
    <name type="ordered locus">SPAB_04077</name>
</gene>
<reference key="1">
    <citation type="submission" date="2007-11" db="EMBL/GenBank/DDBJ databases">
        <authorList>
            <consortium name="The Salmonella enterica serovar Paratyphi B Genome Sequencing Project"/>
            <person name="McClelland M."/>
            <person name="Sanderson E.K."/>
            <person name="Porwollik S."/>
            <person name="Spieth J."/>
            <person name="Clifton W.S."/>
            <person name="Fulton R."/>
            <person name="Cordes M."/>
            <person name="Wollam A."/>
            <person name="Shah N."/>
            <person name="Pepin K."/>
            <person name="Bhonagiri V."/>
            <person name="Nash W."/>
            <person name="Johnson M."/>
            <person name="Thiruvilangam P."/>
            <person name="Wilson R."/>
        </authorList>
    </citation>
    <scope>NUCLEOTIDE SEQUENCE [LARGE SCALE GENOMIC DNA]</scope>
    <source>
        <strain>ATCC BAA-1250 / SPB7</strain>
    </source>
</reference>
<accession>A9N712</accession>
<feature type="chain" id="PRO_1000085353" description="DnaA initiator-associating protein DiaA">
    <location>
        <begin position="1"/>
        <end position="196"/>
    </location>
</feature>
<feature type="domain" description="SIS" evidence="1">
    <location>
        <begin position="34"/>
        <end position="196"/>
    </location>
</feature>
<protein>
    <recommendedName>
        <fullName evidence="1">DnaA initiator-associating protein DiaA</fullName>
    </recommendedName>
</protein>